<name>PRS33_HUMAN</name>
<protein>
    <recommendedName>
        <fullName>Serine protease 33</fullName>
        <ecNumber>3.4.21.-</ecNumber>
    </recommendedName>
    <alternativeName>
        <fullName>Serine protease EOS</fullName>
    </alternativeName>
</protein>
<proteinExistence type="evidence at protein level"/>
<feature type="signal peptide" evidence="2">
    <location>
        <begin position="1"/>
        <end position="22"/>
    </location>
</feature>
<feature type="chain" id="PRO_0000299316" description="Serine protease 33">
    <location>
        <begin position="23"/>
        <end position="280"/>
    </location>
</feature>
<feature type="domain" description="Peptidase S1" evidence="3">
    <location>
        <begin position="37"/>
        <end position="279"/>
    </location>
</feature>
<feature type="active site" description="Charge relay system" evidence="1">
    <location>
        <position position="77"/>
    </location>
</feature>
<feature type="active site" description="Charge relay system" evidence="1">
    <location>
        <position position="126"/>
    </location>
</feature>
<feature type="active site" description="Charge relay system" evidence="1">
    <location>
        <position position="231"/>
    </location>
</feature>
<feature type="disulfide bond" evidence="3">
    <location>
        <begin position="62"/>
        <end position="78"/>
    </location>
</feature>
<feature type="disulfide bond" evidence="3">
    <location>
        <begin position="160"/>
        <end position="237"/>
    </location>
</feature>
<feature type="disulfide bond" evidence="3">
    <location>
        <begin position="193"/>
        <end position="216"/>
    </location>
</feature>
<feature type="disulfide bond" evidence="3">
    <location>
        <begin position="227"/>
        <end position="255"/>
    </location>
</feature>
<feature type="sequence conflict" description="In Ref. 1; AAN04055." evidence="5" ref="1">
    <original>R</original>
    <variation>P</variation>
    <location>
        <position position="57"/>
    </location>
</feature>
<accession>Q8NF86</accession>
<accession>A6NNQ3</accession>
<accession>Q8N171</accession>
<sequence>MRGVSCLQVLLLLVLGAAGTQGRKSAACGQPRMSSRIVGGRDGRDGEWPWQASIQHRGAHVCGGSLIAPQWVLTAAHCFPRRALPAEYRVRLGALRLGSTSPRTLSVPVRRVLLPPDYSEDGARGDLALLQLRRPVPLSARVQPVCLPVPGARPPPGTPCRVTGWGSLRPGVPLPEWRPLQGVRVPLLDSRTCDGLYHVGADVPQAERIVLPGSLCAGYPQGHKDACQGDSGGPLTCLQSGSWVLVGVVSWGKGCALPNRPGVYTSVATYSPWIQARVSF</sequence>
<reference key="1">
    <citation type="journal article" date="2003" name="Biochem. J.">
        <title>A novel serine protease predominately expressed in macrophages.</title>
        <authorList>
            <person name="Chen C."/>
            <person name="Darrow A.L."/>
            <person name="Qi J.-S."/>
            <person name="D'Andrea M.R."/>
            <person name="Andrade-Gordon P."/>
        </authorList>
    </citation>
    <scope>NUCLEOTIDE SEQUENCE [MRNA]</scope>
    <scope>FUNCTION</scope>
    <scope>ENZYME ACTIVITY</scope>
    <scope>BIOPHYSICOCHEMICAL PROPERTIES</scope>
    <scope>TISSUE SPECIFICITY</scope>
    <scope>INDUCTION</scope>
</reference>
<reference key="2">
    <citation type="journal article" date="2004" name="Nature">
        <title>The sequence and analysis of duplication-rich human chromosome 16.</title>
        <authorList>
            <person name="Martin J."/>
            <person name="Han C."/>
            <person name="Gordon L.A."/>
            <person name="Terry A."/>
            <person name="Prabhakar S."/>
            <person name="She X."/>
            <person name="Xie G."/>
            <person name="Hellsten U."/>
            <person name="Chan Y.M."/>
            <person name="Altherr M."/>
            <person name="Couronne O."/>
            <person name="Aerts A."/>
            <person name="Bajorek E."/>
            <person name="Black S."/>
            <person name="Blumer H."/>
            <person name="Branscomb E."/>
            <person name="Brown N.C."/>
            <person name="Bruno W.J."/>
            <person name="Buckingham J.M."/>
            <person name="Callen D.F."/>
            <person name="Campbell C.S."/>
            <person name="Campbell M.L."/>
            <person name="Campbell E.W."/>
            <person name="Caoile C."/>
            <person name="Challacombe J.F."/>
            <person name="Chasteen L.A."/>
            <person name="Chertkov O."/>
            <person name="Chi H.C."/>
            <person name="Christensen M."/>
            <person name="Clark L.M."/>
            <person name="Cohn J.D."/>
            <person name="Denys M."/>
            <person name="Detter J.C."/>
            <person name="Dickson M."/>
            <person name="Dimitrijevic-Bussod M."/>
            <person name="Escobar J."/>
            <person name="Fawcett J.J."/>
            <person name="Flowers D."/>
            <person name="Fotopulos D."/>
            <person name="Glavina T."/>
            <person name="Gomez M."/>
            <person name="Gonzales E."/>
            <person name="Goodstein D."/>
            <person name="Goodwin L.A."/>
            <person name="Grady D.L."/>
            <person name="Grigoriev I."/>
            <person name="Groza M."/>
            <person name="Hammon N."/>
            <person name="Hawkins T."/>
            <person name="Haydu L."/>
            <person name="Hildebrand C.E."/>
            <person name="Huang W."/>
            <person name="Israni S."/>
            <person name="Jett J."/>
            <person name="Jewett P.B."/>
            <person name="Kadner K."/>
            <person name="Kimball H."/>
            <person name="Kobayashi A."/>
            <person name="Krawczyk M.-C."/>
            <person name="Leyba T."/>
            <person name="Longmire J.L."/>
            <person name="Lopez F."/>
            <person name="Lou Y."/>
            <person name="Lowry S."/>
            <person name="Ludeman T."/>
            <person name="Manohar C.F."/>
            <person name="Mark G.A."/>
            <person name="McMurray K.L."/>
            <person name="Meincke L.J."/>
            <person name="Morgan J."/>
            <person name="Moyzis R.K."/>
            <person name="Mundt M.O."/>
            <person name="Munk A.C."/>
            <person name="Nandkeshwar R.D."/>
            <person name="Pitluck S."/>
            <person name="Pollard M."/>
            <person name="Predki P."/>
            <person name="Parson-Quintana B."/>
            <person name="Ramirez L."/>
            <person name="Rash S."/>
            <person name="Retterer J."/>
            <person name="Ricke D.O."/>
            <person name="Robinson D.L."/>
            <person name="Rodriguez A."/>
            <person name="Salamov A."/>
            <person name="Saunders E.H."/>
            <person name="Scott D."/>
            <person name="Shough T."/>
            <person name="Stallings R.L."/>
            <person name="Stalvey M."/>
            <person name="Sutherland R.D."/>
            <person name="Tapia R."/>
            <person name="Tesmer J.G."/>
            <person name="Thayer N."/>
            <person name="Thompson L.S."/>
            <person name="Tice H."/>
            <person name="Torney D.C."/>
            <person name="Tran-Gyamfi M."/>
            <person name="Tsai M."/>
            <person name="Ulanovsky L.E."/>
            <person name="Ustaszewska A."/>
            <person name="Vo N."/>
            <person name="White P.S."/>
            <person name="Williams A.L."/>
            <person name="Wills P.L."/>
            <person name="Wu J.-R."/>
            <person name="Wu K."/>
            <person name="Yang J."/>
            <person name="DeJong P."/>
            <person name="Bruce D."/>
            <person name="Doggett N.A."/>
            <person name="Deaven L."/>
            <person name="Schmutz J."/>
            <person name="Grimwood J."/>
            <person name="Richardson P."/>
            <person name="Rokhsar D.S."/>
            <person name="Eichler E.E."/>
            <person name="Gilna P."/>
            <person name="Lucas S.M."/>
            <person name="Myers R.M."/>
            <person name="Rubin E.M."/>
            <person name="Pennacchio L.A."/>
        </authorList>
    </citation>
    <scope>NUCLEOTIDE SEQUENCE [LARGE SCALE GENOMIC DNA]</scope>
</reference>
<reference key="3">
    <citation type="submission" date="2005-09" db="EMBL/GenBank/DDBJ databases">
        <authorList>
            <person name="Mural R.J."/>
            <person name="Istrail S."/>
            <person name="Sutton G.G."/>
            <person name="Florea L."/>
            <person name="Halpern A.L."/>
            <person name="Mobarry C.M."/>
            <person name="Lippert R."/>
            <person name="Walenz B."/>
            <person name="Shatkay H."/>
            <person name="Dew I."/>
            <person name="Miller J.R."/>
            <person name="Flanigan M.J."/>
            <person name="Edwards N.J."/>
            <person name="Bolanos R."/>
            <person name="Fasulo D."/>
            <person name="Halldorsson B.V."/>
            <person name="Hannenhalli S."/>
            <person name="Turner R."/>
            <person name="Yooseph S."/>
            <person name="Lu F."/>
            <person name="Nusskern D.R."/>
            <person name="Shue B.C."/>
            <person name="Zheng X.H."/>
            <person name="Zhong F."/>
            <person name="Delcher A.L."/>
            <person name="Huson D.H."/>
            <person name="Kravitz S.A."/>
            <person name="Mouchard L."/>
            <person name="Reinert K."/>
            <person name="Remington K.A."/>
            <person name="Clark A.G."/>
            <person name="Waterman M.S."/>
            <person name="Eichler E.E."/>
            <person name="Adams M.D."/>
            <person name="Hunkapiller M.W."/>
            <person name="Myers E.W."/>
            <person name="Venter J.C."/>
        </authorList>
    </citation>
    <scope>NUCLEOTIDE SEQUENCE [LARGE SCALE GENOMIC DNA]</scope>
</reference>
<reference key="4">
    <citation type="journal article" date="2004" name="Genome Res.">
        <title>The status, quality, and expansion of the NIH full-length cDNA project: the Mammalian Gene Collection (MGC).</title>
        <authorList>
            <consortium name="The MGC Project Team"/>
        </authorList>
    </citation>
    <scope>NUCLEOTIDE SEQUENCE [LARGE SCALE MRNA]</scope>
    <source>
        <tissue>Brain</tissue>
        <tissue>Skin</tissue>
    </source>
</reference>
<evidence type="ECO:0000250" key="1"/>
<evidence type="ECO:0000255" key="2"/>
<evidence type="ECO:0000255" key="3">
    <source>
        <dbReference type="PROSITE-ProRule" id="PRU00274"/>
    </source>
</evidence>
<evidence type="ECO:0000269" key="4">
    <source>
    </source>
</evidence>
<evidence type="ECO:0000305" key="5"/>
<gene>
    <name type="primary">PRSS33</name>
</gene>
<organism>
    <name type="scientific">Homo sapiens</name>
    <name type="common">Human</name>
    <dbReference type="NCBI Taxonomy" id="9606"/>
    <lineage>
        <taxon>Eukaryota</taxon>
        <taxon>Metazoa</taxon>
        <taxon>Chordata</taxon>
        <taxon>Craniata</taxon>
        <taxon>Vertebrata</taxon>
        <taxon>Euteleostomi</taxon>
        <taxon>Mammalia</taxon>
        <taxon>Eutheria</taxon>
        <taxon>Euarchontoglires</taxon>
        <taxon>Primates</taxon>
        <taxon>Haplorrhini</taxon>
        <taxon>Catarrhini</taxon>
        <taxon>Hominidae</taxon>
        <taxon>Homo</taxon>
    </lineage>
</organism>
<keyword id="KW-1015">Disulfide bond</keyword>
<keyword id="KW-0378">Hydrolase</keyword>
<keyword id="KW-0645">Protease</keyword>
<keyword id="KW-1267">Proteomics identification</keyword>
<keyword id="KW-1185">Reference proteome</keyword>
<keyword id="KW-0964">Secreted</keyword>
<keyword id="KW-0720">Serine protease</keyword>
<keyword id="KW-0732">Signal</keyword>
<dbReference type="EC" id="3.4.21.-"/>
<dbReference type="EMBL" id="AF536382">
    <property type="protein sequence ID" value="AAN04055.1"/>
    <property type="status" value="ALT_FRAME"/>
    <property type="molecule type" value="mRNA"/>
</dbReference>
<dbReference type="EMBL" id="AC092117">
    <property type="status" value="NOT_ANNOTATED_CDS"/>
    <property type="molecule type" value="Genomic_DNA"/>
</dbReference>
<dbReference type="EMBL" id="CH471112">
    <property type="protein sequence ID" value="EAW85469.1"/>
    <property type="molecule type" value="Genomic_DNA"/>
</dbReference>
<dbReference type="EMBL" id="BC036846">
    <property type="protein sequence ID" value="AAH36846.2"/>
    <property type="molecule type" value="mRNA"/>
</dbReference>
<dbReference type="EMBL" id="BC062334">
    <property type="protein sequence ID" value="AAH62334.1"/>
    <property type="molecule type" value="mRNA"/>
</dbReference>
<dbReference type="CCDS" id="CCDS42110.1"/>
<dbReference type="RefSeq" id="NP_001372391.1">
    <property type="nucleotide sequence ID" value="NM_001385462.1"/>
</dbReference>
<dbReference type="RefSeq" id="NP_001372392.1">
    <property type="nucleotide sequence ID" value="NM_001385463.1"/>
</dbReference>
<dbReference type="RefSeq" id="NP_001372393.1">
    <property type="nucleotide sequence ID" value="NM_001385464.1"/>
</dbReference>
<dbReference type="RefSeq" id="NP_690851.2">
    <property type="nucleotide sequence ID" value="NM_152891.3"/>
</dbReference>
<dbReference type="RefSeq" id="XP_011520753.1">
    <property type="nucleotide sequence ID" value="XM_011522451.2"/>
</dbReference>
<dbReference type="RefSeq" id="XP_011520754.1">
    <property type="nucleotide sequence ID" value="XM_011522452.2"/>
</dbReference>
<dbReference type="SMR" id="Q8NF86"/>
<dbReference type="BioGRID" id="129278">
    <property type="interactions" value="46"/>
</dbReference>
<dbReference type="FunCoup" id="Q8NF86">
    <property type="interactions" value="107"/>
</dbReference>
<dbReference type="IntAct" id="Q8NF86">
    <property type="interactions" value="8"/>
</dbReference>
<dbReference type="STRING" id="9606.ENSP00000293851"/>
<dbReference type="MEROPS" id="S01.075"/>
<dbReference type="iPTMnet" id="Q8NF86"/>
<dbReference type="PhosphoSitePlus" id="Q8NF86"/>
<dbReference type="BioMuta" id="PRSS33"/>
<dbReference type="DMDM" id="212286047"/>
<dbReference type="jPOST" id="Q8NF86"/>
<dbReference type="MassIVE" id="Q8NF86"/>
<dbReference type="PaxDb" id="9606-ENSP00000293851"/>
<dbReference type="PeptideAtlas" id="Q8NF86"/>
<dbReference type="ProteomicsDB" id="73267"/>
<dbReference type="Antibodypedia" id="62205">
    <property type="antibodies" value="80 antibodies from 22 providers"/>
</dbReference>
<dbReference type="DNASU" id="260429"/>
<dbReference type="Ensembl" id="ENST00000293851.9">
    <property type="protein sequence ID" value="ENSP00000293851.5"/>
    <property type="gene ID" value="ENSG00000103355.14"/>
</dbReference>
<dbReference type="Ensembl" id="ENST00000570702.5">
    <property type="protein sequence ID" value="ENSP00000458369.1"/>
    <property type="gene ID" value="ENSG00000103355.14"/>
</dbReference>
<dbReference type="Ensembl" id="ENST00000682474.1">
    <property type="protein sequence ID" value="ENSP00000507560.1"/>
    <property type="gene ID" value="ENSG00000103355.14"/>
</dbReference>
<dbReference type="GeneID" id="260429"/>
<dbReference type="KEGG" id="hsa:260429"/>
<dbReference type="MANE-Select" id="ENST00000682474.1">
    <property type="protein sequence ID" value="ENSP00000507560.1"/>
    <property type="RefSeq nucleotide sequence ID" value="NM_152891.3"/>
    <property type="RefSeq protein sequence ID" value="NP_690851.2"/>
</dbReference>
<dbReference type="UCSC" id="uc002cro.1">
    <property type="organism name" value="human"/>
</dbReference>
<dbReference type="AGR" id="HGNC:30405"/>
<dbReference type="CTD" id="260429"/>
<dbReference type="DisGeNET" id="260429"/>
<dbReference type="GeneCards" id="PRSS33"/>
<dbReference type="HGNC" id="HGNC:30405">
    <property type="gene designation" value="PRSS33"/>
</dbReference>
<dbReference type="HPA" id="ENSG00000103355">
    <property type="expression patterns" value="Tissue enriched (fallopian)"/>
</dbReference>
<dbReference type="MIM" id="613797">
    <property type="type" value="gene"/>
</dbReference>
<dbReference type="neXtProt" id="NX_Q8NF86"/>
<dbReference type="OpenTargets" id="ENSG00000103355"/>
<dbReference type="PharmGKB" id="PA134987813"/>
<dbReference type="VEuPathDB" id="HostDB:ENSG00000103355"/>
<dbReference type="eggNOG" id="KOG3627">
    <property type="taxonomic scope" value="Eukaryota"/>
</dbReference>
<dbReference type="GeneTree" id="ENSGT00940000162519"/>
<dbReference type="HOGENOM" id="CLU_006842_1_2_1"/>
<dbReference type="InParanoid" id="Q8NF86"/>
<dbReference type="OMA" id="DARTCDR"/>
<dbReference type="OrthoDB" id="546450at2759"/>
<dbReference type="PAN-GO" id="Q8NF86">
    <property type="GO annotations" value="3 GO annotations based on evolutionary models"/>
</dbReference>
<dbReference type="PhylomeDB" id="Q8NF86"/>
<dbReference type="TreeFam" id="TF351676"/>
<dbReference type="PathwayCommons" id="Q8NF86"/>
<dbReference type="SignaLink" id="Q8NF86"/>
<dbReference type="BioGRID-ORCS" id="260429">
    <property type="hits" value="14 hits in 1137 CRISPR screens"/>
</dbReference>
<dbReference type="ChiTaRS" id="PRSS33">
    <property type="organism name" value="human"/>
</dbReference>
<dbReference type="GenomeRNAi" id="260429"/>
<dbReference type="Pharos" id="Q8NF86">
    <property type="development level" value="Tbio"/>
</dbReference>
<dbReference type="PRO" id="PR:Q8NF86"/>
<dbReference type="Proteomes" id="UP000005640">
    <property type="component" value="Chromosome 16"/>
</dbReference>
<dbReference type="RNAct" id="Q8NF86">
    <property type="molecule type" value="protein"/>
</dbReference>
<dbReference type="Bgee" id="ENSG00000103355">
    <property type="expression patterns" value="Expressed in pigmented layer of retina and 53 other cell types or tissues"/>
</dbReference>
<dbReference type="ExpressionAtlas" id="Q8NF86">
    <property type="expression patterns" value="baseline and differential"/>
</dbReference>
<dbReference type="GO" id="GO:0005737">
    <property type="term" value="C:cytoplasm"/>
    <property type="evidence" value="ECO:0000314"/>
    <property type="project" value="UniProtKB"/>
</dbReference>
<dbReference type="GO" id="GO:0005615">
    <property type="term" value="C:extracellular space"/>
    <property type="evidence" value="ECO:0000318"/>
    <property type="project" value="GO_Central"/>
</dbReference>
<dbReference type="GO" id="GO:0004252">
    <property type="term" value="F:serine-type endopeptidase activity"/>
    <property type="evidence" value="ECO:0000318"/>
    <property type="project" value="GO_Central"/>
</dbReference>
<dbReference type="GO" id="GO:0006508">
    <property type="term" value="P:proteolysis"/>
    <property type="evidence" value="ECO:0000314"/>
    <property type="project" value="UniProtKB"/>
</dbReference>
<dbReference type="CDD" id="cd00190">
    <property type="entry name" value="Tryp_SPc"/>
    <property type="match status" value="1"/>
</dbReference>
<dbReference type="FunFam" id="2.40.10.10:FF:000039">
    <property type="entry name" value="Brain-specific serine protease 4"/>
    <property type="match status" value="1"/>
</dbReference>
<dbReference type="Gene3D" id="2.40.10.10">
    <property type="entry name" value="Trypsin-like serine proteases"/>
    <property type="match status" value="1"/>
</dbReference>
<dbReference type="InterPro" id="IPR009003">
    <property type="entry name" value="Peptidase_S1_PA"/>
</dbReference>
<dbReference type="InterPro" id="IPR043504">
    <property type="entry name" value="Peptidase_S1_PA_chymotrypsin"/>
</dbReference>
<dbReference type="InterPro" id="IPR001314">
    <property type="entry name" value="Peptidase_S1A"/>
</dbReference>
<dbReference type="InterPro" id="IPR001254">
    <property type="entry name" value="Trypsin_dom"/>
</dbReference>
<dbReference type="InterPro" id="IPR018114">
    <property type="entry name" value="TRYPSIN_HIS"/>
</dbReference>
<dbReference type="InterPro" id="IPR033116">
    <property type="entry name" value="TRYPSIN_SER"/>
</dbReference>
<dbReference type="PANTHER" id="PTHR24253:SF58">
    <property type="entry name" value="SERINE PROTEASE 33"/>
    <property type="match status" value="1"/>
</dbReference>
<dbReference type="PANTHER" id="PTHR24253">
    <property type="entry name" value="TRANSMEMBRANE PROTEASE SERINE"/>
    <property type="match status" value="1"/>
</dbReference>
<dbReference type="Pfam" id="PF00089">
    <property type="entry name" value="Trypsin"/>
    <property type="match status" value="1"/>
</dbReference>
<dbReference type="PRINTS" id="PR00722">
    <property type="entry name" value="CHYMOTRYPSIN"/>
</dbReference>
<dbReference type="SMART" id="SM00020">
    <property type="entry name" value="Tryp_SPc"/>
    <property type="match status" value="1"/>
</dbReference>
<dbReference type="SUPFAM" id="SSF50494">
    <property type="entry name" value="Trypsin-like serine proteases"/>
    <property type="match status" value="1"/>
</dbReference>
<dbReference type="PROSITE" id="PS50240">
    <property type="entry name" value="TRYPSIN_DOM"/>
    <property type="match status" value="1"/>
</dbReference>
<dbReference type="PROSITE" id="PS00134">
    <property type="entry name" value="TRYPSIN_HIS"/>
    <property type="match status" value="1"/>
</dbReference>
<dbReference type="PROSITE" id="PS00135">
    <property type="entry name" value="TRYPSIN_SER"/>
    <property type="match status" value="1"/>
</dbReference>
<comment type="function">
    <text evidence="4">Serine protease that has amidolytic activity, cleaving its substrates before Arg residues.</text>
</comment>
<comment type="biophysicochemical properties">
    <kinetics>
        <KM evidence="4">6.9 mM for H-DL-Val-Leu-Arg-pNA</KM>
    </kinetics>
</comment>
<comment type="subcellular location">
    <subcellularLocation>
        <location evidence="1">Secreted</location>
    </subcellularLocation>
</comment>
<comment type="tissue specificity">
    <text evidence="4">Predominantly expressed in macrophages. Present in the spleen, small and large intestine, lung and brain (at protein level). Highly expressed in peripheral leukocytes, ovary, retina, spleen and stomach. Moderately expressed in thymus, uterus and platelets, as well as some brain tissues, such as thalamus and fetal brain.</text>
</comment>
<comment type="induction">
    <text evidence="4">Up-regulated by phorbol myristate acetate (PMA).</text>
</comment>
<comment type="similarity">
    <text evidence="3">Belongs to the peptidase S1 family.</text>
</comment>
<comment type="sequence caution" evidence="5">
    <conflict type="frameshift">
        <sequence resource="EMBL-CDS" id="AAN04055"/>
    </conflict>
</comment>